<sequence>MNTTSEVIVGTGFQAIRQQLAQMHPELNFVEQLWLAYYKWFDNDVVATGLMSFLLHELIYFGRCIPWMIIDAMPYFRRWKIQPKKVPTLAEQWECTRLVLLSHFTVELPQIWLFDPMCATFGLSTSVPFPPVTKMIWQITLFFFLEDTWHYWAHRLFHYGIFYRFIHKVHHRYSAPFGLSAEYAHPLEIILLGAGTVFVPLMWCYFTHDLHLVTMYIWITLRLFQAVDSHAGYDFPWSLNKFLPIWAGADHHDYHHMAFKDNFSSSFRWWDAVLKTDQNYHQFKARRLAAKYEAESKKAK</sequence>
<proteinExistence type="evidence at transcript level"/>
<accession>Q9UUH4</accession>
<organism>
    <name type="scientific">Schizosaccharomyces pombe (strain 972 / ATCC 24843)</name>
    <name type="common">Fission yeast</name>
    <dbReference type="NCBI Taxonomy" id="284812"/>
    <lineage>
        <taxon>Eukaryota</taxon>
        <taxon>Fungi</taxon>
        <taxon>Dikarya</taxon>
        <taxon>Ascomycota</taxon>
        <taxon>Taphrinomycotina</taxon>
        <taxon>Schizosaccharomycetes</taxon>
        <taxon>Schizosaccharomycetales</taxon>
        <taxon>Schizosaccharomycetaceae</taxon>
        <taxon>Schizosaccharomyces</taxon>
    </lineage>
</organism>
<name>ERG25_SCHPO</name>
<evidence type="ECO:0000250" key="1">
    <source>
        <dbReference type="UniProtKB" id="P53045"/>
    </source>
</evidence>
<evidence type="ECO:0000255" key="2"/>
<evidence type="ECO:0000269" key="3">
    <source>
    </source>
</evidence>
<evidence type="ECO:0000269" key="4">
    <source>
    </source>
</evidence>
<evidence type="ECO:0000269" key="5">
    <source>
    </source>
</evidence>
<evidence type="ECO:0000303" key="6">
    <source>
    </source>
</evidence>
<evidence type="ECO:0000305" key="7">
    <source>
    </source>
</evidence>
<evidence type="ECO:0000305" key="8">
    <source>
    </source>
</evidence>
<reference key="1">
    <citation type="journal article" date="2002" name="Nature">
        <title>The genome sequence of Schizosaccharomyces pombe.</title>
        <authorList>
            <person name="Wood V."/>
            <person name="Gwilliam R."/>
            <person name="Rajandream M.A."/>
            <person name="Lyne M.H."/>
            <person name="Lyne R."/>
            <person name="Stewart A."/>
            <person name="Sgouros J.G."/>
            <person name="Peat N."/>
            <person name="Hayles J."/>
            <person name="Baker S.G."/>
            <person name="Basham D."/>
            <person name="Bowman S."/>
            <person name="Brooks K."/>
            <person name="Brown D."/>
            <person name="Brown S."/>
            <person name="Chillingworth T."/>
            <person name="Churcher C.M."/>
            <person name="Collins M."/>
            <person name="Connor R."/>
            <person name="Cronin A."/>
            <person name="Davis P."/>
            <person name="Feltwell T."/>
            <person name="Fraser A."/>
            <person name="Gentles S."/>
            <person name="Goble A."/>
            <person name="Hamlin N."/>
            <person name="Harris D.E."/>
            <person name="Hidalgo J."/>
            <person name="Hodgson G."/>
            <person name="Holroyd S."/>
            <person name="Hornsby T."/>
            <person name="Howarth S."/>
            <person name="Huckle E.J."/>
            <person name="Hunt S."/>
            <person name="Jagels K."/>
            <person name="James K.D."/>
            <person name="Jones L."/>
            <person name="Jones M."/>
            <person name="Leather S."/>
            <person name="McDonald S."/>
            <person name="McLean J."/>
            <person name="Mooney P."/>
            <person name="Moule S."/>
            <person name="Mungall K.L."/>
            <person name="Murphy L.D."/>
            <person name="Niblett D."/>
            <person name="Odell C."/>
            <person name="Oliver K."/>
            <person name="O'Neil S."/>
            <person name="Pearson D."/>
            <person name="Quail M.A."/>
            <person name="Rabbinowitsch E."/>
            <person name="Rutherford K.M."/>
            <person name="Rutter S."/>
            <person name="Saunders D."/>
            <person name="Seeger K."/>
            <person name="Sharp S."/>
            <person name="Skelton J."/>
            <person name="Simmonds M.N."/>
            <person name="Squares R."/>
            <person name="Squares S."/>
            <person name="Stevens K."/>
            <person name="Taylor K."/>
            <person name="Taylor R.G."/>
            <person name="Tivey A."/>
            <person name="Walsh S.V."/>
            <person name="Warren T."/>
            <person name="Whitehead S."/>
            <person name="Woodward J.R."/>
            <person name="Volckaert G."/>
            <person name="Aert R."/>
            <person name="Robben J."/>
            <person name="Grymonprez B."/>
            <person name="Weltjens I."/>
            <person name="Vanstreels E."/>
            <person name="Rieger M."/>
            <person name="Schaefer M."/>
            <person name="Mueller-Auer S."/>
            <person name="Gabel C."/>
            <person name="Fuchs M."/>
            <person name="Duesterhoeft A."/>
            <person name="Fritzc C."/>
            <person name="Holzer E."/>
            <person name="Moestl D."/>
            <person name="Hilbert H."/>
            <person name="Borzym K."/>
            <person name="Langer I."/>
            <person name="Beck A."/>
            <person name="Lehrach H."/>
            <person name="Reinhardt R."/>
            <person name="Pohl T.M."/>
            <person name="Eger P."/>
            <person name="Zimmermann W."/>
            <person name="Wedler H."/>
            <person name="Wambutt R."/>
            <person name="Purnelle B."/>
            <person name="Goffeau A."/>
            <person name="Cadieu E."/>
            <person name="Dreano S."/>
            <person name="Gloux S."/>
            <person name="Lelaure V."/>
            <person name="Mottier S."/>
            <person name="Galibert F."/>
            <person name="Aves S.J."/>
            <person name="Xiang Z."/>
            <person name="Hunt C."/>
            <person name="Moore K."/>
            <person name="Hurst S.M."/>
            <person name="Lucas M."/>
            <person name="Rochet M."/>
            <person name="Gaillardin C."/>
            <person name="Tallada V.A."/>
            <person name="Garzon A."/>
            <person name="Thode G."/>
            <person name="Daga R.R."/>
            <person name="Cruzado L."/>
            <person name="Jimenez J."/>
            <person name="Sanchez M."/>
            <person name="del Rey F."/>
            <person name="Benito J."/>
            <person name="Dominguez A."/>
            <person name="Revuelta J.L."/>
            <person name="Moreno S."/>
            <person name="Armstrong J."/>
            <person name="Forsburg S.L."/>
            <person name="Cerutti L."/>
            <person name="Lowe T."/>
            <person name="McCombie W.R."/>
            <person name="Paulsen I."/>
            <person name="Potashkin J."/>
            <person name="Shpakovski G.V."/>
            <person name="Ussery D."/>
            <person name="Barrell B.G."/>
            <person name="Nurse P."/>
        </authorList>
    </citation>
    <scope>NUCLEOTIDE SEQUENCE [LARGE SCALE GENOMIC DNA]</scope>
    <source>
        <strain>972 / ATCC 24843</strain>
    </source>
</reference>
<reference key="2">
    <citation type="journal article" date="1995" name="FEMS Microbiol. Lett.">
        <title>Identification of 24-methylene-24,25-dihydrolanosterol as a precursor of ergosterol in the yeasts Schizosaccharomyces pombe and Schizosaccharomyces octosporus.</title>
        <authorList>
            <person name="Harmouch N."/>
            <person name="Coulon J."/>
            <person name="Bonaly R."/>
        </authorList>
    </citation>
    <scope>FUNCTION</scope>
</reference>
<reference key="3">
    <citation type="journal article" date="2005" name="Cell">
        <title>SREBP pathway responds to sterols and functions as an oxygen sensor in fission yeast.</title>
        <authorList>
            <person name="Hughes A.L."/>
            <person name="Todd B.L."/>
            <person name="Espenshade P.J."/>
        </authorList>
    </citation>
    <scope>IDENTIFICATION</scope>
    <scope>INDUCTION</scope>
</reference>
<reference key="4">
    <citation type="journal article" date="2006" name="Mol. Cell. Biol.">
        <title>Sterol regulatory element binding protein is a principal regulator of anaerobic gene expression in fission yeast.</title>
        <authorList>
            <person name="Todd B.L."/>
            <person name="Stewart E.V."/>
            <person name="Burg J.S."/>
            <person name="Hughes A.L."/>
            <person name="Espenshade P.J."/>
        </authorList>
    </citation>
    <scope>INDUCTION</scope>
</reference>
<reference key="5">
    <citation type="journal article" date="2008" name="Microbiology">
        <title>Multiple functions of ergosterol in the fission yeast Schizosaccharomyces pombe.</title>
        <authorList>
            <person name="Iwaki T."/>
            <person name="Iefuji H."/>
            <person name="Hiraga Y."/>
            <person name="Hosomi A."/>
            <person name="Morita T."/>
            <person name="Giga-Hama Y."/>
            <person name="Takegawa K."/>
        </authorList>
    </citation>
    <scope>FUNCTION</scope>
</reference>
<feature type="chain" id="PRO_0000117038" description="C-4 methylsterol oxidase erg25">
    <location>
        <begin position="1"/>
        <end position="300"/>
    </location>
</feature>
<feature type="transmembrane region" description="Helical" evidence="2">
    <location>
        <begin position="186"/>
        <end position="206"/>
    </location>
</feature>
<feature type="domain" description="Fatty acid hydroxylase" evidence="2">
    <location>
        <begin position="140"/>
        <end position="276"/>
    </location>
</feature>
<feature type="short sequence motif" description="Histidine box-1">
    <location>
        <begin position="154"/>
        <end position="158"/>
    </location>
</feature>
<feature type="short sequence motif" description="Histidine box-2">
    <location>
        <begin position="167"/>
        <end position="171"/>
    </location>
</feature>
<feature type="short sequence motif" description="Histidine box-3">
    <location>
        <begin position="251"/>
        <end position="257"/>
    </location>
</feature>
<protein>
    <recommendedName>
        <fullName evidence="6">C-4 methylsterol oxidase erg25</fullName>
        <ecNumber evidence="1">1.14.18.-</ecNumber>
    </recommendedName>
    <alternativeName>
        <fullName evidence="1">Ergosterol biosynthetic protein 25</fullName>
    </alternativeName>
    <alternativeName>
        <fullName evidence="1">Sterol-C4-methyl oxidase erg25</fullName>
        <shortName evidence="1">SMO</shortName>
    </alternativeName>
</protein>
<comment type="function">
    <text evidence="1 3 7 8">C-4 methylsterol oxidase; part of the third module of ergosterol biosynthesis pathway that includes by the late steps of the pathway (PubMed:15797383). Erg25 is a catalytic component of the C-4 demethylation complex that catalyzes the three-step monooxygenation required for the demethylation of 4,4-dimethyl and 4alpha-methylsterols (By similarity). The third module or late pathway involves the ergosterol synthesis itself through consecutive reactions that mainly occur in the endoplasmic reticulum (ER) membrane. Firstly, the squalene synthase erg9 catalyzes the condensation of 2 farnesyl pyrophosphate moieties to form squalene, which is the precursor of all steroids. Secondly, squalene is converted into lanosterol by the consecutive action of the squalene epoxidase erg1 and the lanosterol synthase erg7. The lanosterol 14-alpha-demethylase erg11/cyp1 catalyzes C14-demethylation of lanosterol to produce 4,4'-dimethyl cholesta-8,14,24-triene-3-beta-ol. In the next steps, a complex process involving various demethylation, reduction and desaturation reactions catalyzed by the C-14 reductase erg24 and the C-4 demethylation complex erg25-erg26-erg27 leads to the production of zymosterol. Erg28 likely functions in the C-4 demethylation complex reaction by tethering erg26 and Erg27 to the endoplasmic reticulum or to facilitate interaction between these proteins. Then, the sterol 24-C-methyltransferase erg6 catalyzes the methyl transfer from S-adenosyl-methionine to the C-24 of zymosterol to form fecosterol. The C-8 sterol isomerase erg2 catalyzes the reaction which results in unsaturation at C-7 in the B ring of sterols and thus converts fecosterol to episterol. The sterol-C5-desaturases erg31 and erg32 then catalyze the introduction of a C-5 double bond in the B ring to produce 5-dehydroepisterol. The C-22 sterol desaturase erg5 further converts 5-dehydroepisterol into ergosta-5,7,22,24(28)-tetraen-3beta-ol by forming the C-22(23) double bond in the sterol side chain. Finally, ergosta-5,7,22,24(28)-tetraen-3beta-ol is substrate of the C-24(28) sterol reductase erg4 to produce ergosterol (Probable) (PubMed:18310029). In the genus Schizosaccharomyces, a second route exists between lanosterol and fecosterol, via the methylation of lanosterol to eburicol by erg6, followed by C14-demethylation by erg11/cyp1 and C4-demethylation by the demethylation complex erg25-erg26-erg27 (Probable) (PubMed:8586261).</text>
</comment>
<comment type="catalytic activity">
    <reaction evidence="1">
        <text>4,4-dimethyl-5alpha-cholesta-8,24-dien-3beta-ol + 6 Fe(II)-[cytochrome b5] + 3 O2 + 5 H(+) = 4beta-methylzymosterol-4alpha-carboxylate + 6 Fe(III)-[cytochrome b5] + 4 H2O</text>
        <dbReference type="Rhea" id="RHEA:55244"/>
        <dbReference type="Rhea" id="RHEA-COMP:10438"/>
        <dbReference type="Rhea" id="RHEA-COMP:10439"/>
        <dbReference type="ChEBI" id="CHEBI:15377"/>
        <dbReference type="ChEBI" id="CHEBI:15378"/>
        <dbReference type="ChEBI" id="CHEBI:15379"/>
        <dbReference type="ChEBI" id="CHEBI:18364"/>
        <dbReference type="ChEBI" id="CHEBI:29033"/>
        <dbReference type="ChEBI" id="CHEBI:29034"/>
        <dbReference type="ChEBI" id="CHEBI:64925"/>
    </reaction>
    <physiologicalReaction direction="left-to-right" evidence="1">
        <dbReference type="Rhea" id="RHEA:55245"/>
    </physiologicalReaction>
</comment>
<comment type="catalytic activity">
    <reaction evidence="1">
        <text>4alpha-methylzymosterol + 6 Fe(II)-[cytochrome b5] + 3 O2 + 5 H(+) = 4alpha-carboxyzymosterol + 6 Fe(III)-[cytochrome b5] + 4 H2O</text>
        <dbReference type="Rhea" id="RHEA:47056"/>
        <dbReference type="Rhea" id="RHEA-COMP:10438"/>
        <dbReference type="Rhea" id="RHEA-COMP:10439"/>
        <dbReference type="ChEBI" id="CHEBI:1949"/>
        <dbReference type="ChEBI" id="CHEBI:15377"/>
        <dbReference type="ChEBI" id="CHEBI:15378"/>
        <dbReference type="ChEBI" id="CHEBI:15379"/>
        <dbReference type="ChEBI" id="CHEBI:29033"/>
        <dbReference type="ChEBI" id="CHEBI:29034"/>
        <dbReference type="ChEBI" id="CHEBI:143575"/>
    </reaction>
    <physiologicalReaction direction="left-to-right" evidence="1">
        <dbReference type="Rhea" id="RHEA:47057"/>
    </physiologicalReaction>
</comment>
<comment type="cofactor">
    <cofactor evidence="1">
        <name>Fe cation</name>
        <dbReference type="ChEBI" id="CHEBI:24875"/>
    </cofactor>
</comment>
<comment type="pathway">
    <text evidence="1">Steroid biosynthesis; zymosterol biosynthesis; zymosterol from lanosterol: step 3/6.</text>
</comment>
<comment type="pathway">
    <text evidence="1">Steroid metabolism; ergosterol biosynthesis.</text>
</comment>
<comment type="subunit">
    <text evidence="1">Heterotetramer of erg25, erg26, erg27 and erg28 (By similarity). Erg28 acts as a scaffold to tether erg27 and other 4,4-demethylation-related enzymes, forming a demethylation enzyme complex, in the endoplasmic reticulum (By similarity).</text>
</comment>
<comment type="subcellular location">
    <subcellularLocation>
        <location evidence="1">Endoplasmic reticulum membrane</location>
        <topology evidence="2">Single-pass membrane protein</topology>
    </subcellularLocation>
</comment>
<comment type="induction">
    <text evidence="3 4">Expression is highly up-regulated under low oxygen and low sterol conditions in a sre1- and scp1-dependent manner.</text>
</comment>
<comment type="domain">
    <text evidence="1">The histidine box domains may contain the active site and/or be involved in metal ion binding.</text>
</comment>
<comment type="miscellaneous">
    <text evidence="5">In Aspergillus, the biosynthesis pathway of the sterol precursors leading to the prevalent sterol ergosterol differs from yeast. The ringsystem of lanosterol in S.cerevisiae is firstly demethylised in three enzymatic steps leading to the intermediate zymosterol and secondly a methyl group is added to zymosterol by the sterol 24-C-methyltransferase to form fecosterol. In Aspergillus, lanosterol is firstly transmethylated by the sterol 24-C-methyltransferase leading to the intermediate eburicol and secondly demethylated in three steps to form fecosterol. In the genus Schizosaccharomyces, 2 routes exist from lanosterol to erposterol: the classical one via zymosterol and the second one via the formation of eburicol followed by demethylation.</text>
</comment>
<comment type="similarity">
    <text evidence="1">Belongs to the sterol desaturase family.</text>
</comment>
<keyword id="KW-0256">Endoplasmic reticulum</keyword>
<keyword id="KW-0408">Iron</keyword>
<keyword id="KW-0444">Lipid biosynthesis</keyword>
<keyword id="KW-0443">Lipid metabolism</keyword>
<keyword id="KW-0472">Membrane</keyword>
<keyword id="KW-0520">NAD</keyword>
<keyword id="KW-0560">Oxidoreductase</keyword>
<keyword id="KW-1185">Reference proteome</keyword>
<keyword id="KW-0752">Steroid biosynthesis</keyword>
<keyword id="KW-0753">Steroid metabolism</keyword>
<keyword id="KW-0756">Sterol biosynthesis</keyword>
<keyword id="KW-1207">Sterol metabolism</keyword>
<keyword id="KW-0812">Transmembrane</keyword>
<keyword id="KW-1133">Transmembrane helix</keyword>
<gene>
    <name evidence="6" type="primary">erg25</name>
    <name type="ORF">SPAC630.08c</name>
</gene>
<dbReference type="EC" id="1.14.18.-" evidence="1"/>
<dbReference type="EMBL" id="CU329670">
    <property type="protein sequence ID" value="CAB52730.1"/>
    <property type="molecule type" value="Genomic_DNA"/>
</dbReference>
<dbReference type="PIR" id="T38986">
    <property type="entry name" value="T38986"/>
</dbReference>
<dbReference type="RefSeq" id="NP_592903.1">
    <property type="nucleotide sequence ID" value="NM_001018303.2"/>
</dbReference>
<dbReference type="FunCoup" id="Q9UUH4">
    <property type="interactions" value="164"/>
</dbReference>
<dbReference type="STRING" id="284812.Q9UUH4"/>
<dbReference type="iPTMnet" id="Q9UUH4"/>
<dbReference type="PaxDb" id="4896-SPAC630.08c.1"/>
<dbReference type="EnsemblFungi" id="SPAC630.08c.1">
    <property type="protein sequence ID" value="SPAC630.08c.1:pep"/>
    <property type="gene ID" value="SPAC630.08c"/>
</dbReference>
<dbReference type="GeneID" id="2543373"/>
<dbReference type="KEGG" id="spo:2543373"/>
<dbReference type="PomBase" id="SPAC630.08c">
    <property type="gene designation" value="erg25"/>
</dbReference>
<dbReference type="VEuPathDB" id="FungiDB:SPAC630.08c"/>
<dbReference type="eggNOG" id="KOG0873">
    <property type="taxonomic scope" value="Eukaryota"/>
</dbReference>
<dbReference type="HOGENOM" id="CLU_047036_5_0_1"/>
<dbReference type="InParanoid" id="Q9UUH4"/>
<dbReference type="OMA" id="EIMFYYA"/>
<dbReference type="PhylomeDB" id="Q9UUH4"/>
<dbReference type="Reactome" id="R-SPO-191273">
    <property type="pathway name" value="Cholesterol biosynthesis"/>
</dbReference>
<dbReference type="Reactome" id="R-SPO-192105">
    <property type="pathway name" value="Synthesis of bile acids and bile salts"/>
</dbReference>
<dbReference type="UniPathway" id="UPA00768"/>
<dbReference type="UniPathway" id="UPA00770">
    <property type="reaction ID" value="UER00756"/>
</dbReference>
<dbReference type="PRO" id="PR:Q9UUH4"/>
<dbReference type="Proteomes" id="UP000002485">
    <property type="component" value="Chromosome I"/>
</dbReference>
<dbReference type="GO" id="GO:0005783">
    <property type="term" value="C:endoplasmic reticulum"/>
    <property type="evidence" value="ECO:0000314"/>
    <property type="project" value="PomBase"/>
</dbReference>
<dbReference type="GO" id="GO:0005789">
    <property type="term" value="C:endoplasmic reticulum membrane"/>
    <property type="evidence" value="ECO:0000318"/>
    <property type="project" value="GO_Central"/>
</dbReference>
<dbReference type="GO" id="GO:0000254">
    <property type="term" value="F:C-4 methylsterol oxidase activity"/>
    <property type="evidence" value="ECO:0000318"/>
    <property type="project" value="GO_Central"/>
</dbReference>
<dbReference type="GO" id="GO:0005506">
    <property type="term" value="F:iron ion binding"/>
    <property type="evidence" value="ECO:0000255"/>
    <property type="project" value="PomBase"/>
</dbReference>
<dbReference type="GO" id="GO:0006696">
    <property type="term" value="P:ergosterol biosynthetic process"/>
    <property type="evidence" value="ECO:0000318"/>
    <property type="project" value="GO_Central"/>
</dbReference>
<dbReference type="InterPro" id="IPR006694">
    <property type="entry name" value="Fatty_acid_hydroxylase"/>
</dbReference>
<dbReference type="InterPro" id="IPR050307">
    <property type="entry name" value="Sterol_Desaturase_Related"/>
</dbReference>
<dbReference type="PANTHER" id="PTHR11863">
    <property type="entry name" value="STEROL DESATURASE"/>
    <property type="match status" value="1"/>
</dbReference>
<dbReference type="Pfam" id="PF04116">
    <property type="entry name" value="FA_hydroxylase"/>
    <property type="match status" value="1"/>
</dbReference>